<organism>
    <name type="scientific">Burkholderia pseudomallei (strain K96243)</name>
    <dbReference type="NCBI Taxonomy" id="272560"/>
    <lineage>
        <taxon>Bacteria</taxon>
        <taxon>Pseudomonadati</taxon>
        <taxon>Pseudomonadota</taxon>
        <taxon>Betaproteobacteria</taxon>
        <taxon>Burkholderiales</taxon>
        <taxon>Burkholderiaceae</taxon>
        <taxon>Burkholderia</taxon>
        <taxon>pseudomallei group</taxon>
    </lineage>
</organism>
<sequence>MSEHHSDTRDDLDESKFVTFEGSPFQLYQPYPPSGDQPTAIATLVEGVEDGLSFQTLLGVTGSGKTYTMANTIARLGRPAIVFAPNKTLAAQLYAEFREFFPRNAVEYFVSYYDYYQPEAYVPQRDLFIEKDSSINEHIEQMRLSATKSLMERRDVVIVATVSAIYGIGNPSEYHQMILTLRTGDKIGQREVIARLIAMQYTRNEQDFQRGTFRVRGDTIDIFPAEHAEMAVRVELFDDEVDTLHLFDPLTGRVRQKIPRFTVYPSSHYVTPRETVMRAVETIKDELRERLEFFHRDGKLVEAQRLEQRTRFDLEMLQELGFCKGIENYSRHFSGAAPGEPPPTLVDYLPPDALMLLDESHVLIGQLNGMYNGDRARKENLVDYGFRLPSALDNRPLKFPEFERKMRQVVFVSATPADYEQRVSGQTAEQVVRPTGLVDPQIEVRPASTQVDDVLSEITERVKANERVLITVLTKRMAEQLTEFLADHGVKVRYLHSDIDTVERVEIIRDLRLGTFDVLVGINLLREGLDIPEVSLVAILDADKEGFLRAERSLIQTIGRAARNVNGKALLYADRITDSMRRAIDETERRRAKQIAYNEKMGITPRGVVKRIKDIIDGVYNADEARAELKEAQQRAKFEDMSEKQIAKEIKRLEKQMADYAKNLEFEKAAQTRDQLALLRERVFGANVGDHVSGGE</sequence>
<evidence type="ECO:0000255" key="1">
    <source>
        <dbReference type="HAMAP-Rule" id="MF_00204"/>
    </source>
</evidence>
<protein>
    <recommendedName>
        <fullName evidence="1">UvrABC system protein B</fullName>
        <shortName evidence="1">Protein UvrB</shortName>
    </recommendedName>
    <alternativeName>
        <fullName evidence="1">Excinuclease ABC subunit B</fullName>
    </alternativeName>
</protein>
<dbReference type="EMBL" id="BX571966">
    <property type="protein sequence ID" value="CAH37804.1"/>
    <property type="molecule type" value="Genomic_DNA"/>
</dbReference>
<dbReference type="RefSeq" id="WP_004199587.1">
    <property type="nucleotide sequence ID" value="NZ_CP009537.1"/>
</dbReference>
<dbReference type="RefSeq" id="YP_110376.1">
    <property type="nucleotide sequence ID" value="NC_006351.1"/>
</dbReference>
<dbReference type="SMR" id="Q63NE3"/>
<dbReference type="STRING" id="272560.BPSS0356"/>
<dbReference type="GeneID" id="93062475"/>
<dbReference type="KEGG" id="bps:BPSS0356"/>
<dbReference type="PATRIC" id="fig|272560.51.peg.6479"/>
<dbReference type="eggNOG" id="COG0556">
    <property type="taxonomic scope" value="Bacteria"/>
</dbReference>
<dbReference type="Proteomes" id="UP000000605">
    <property type="component" value="Chromosome 2"/>
</dbReference>
<dbReference type="GO" id="GO:0005737">
    <property type="term" value="C:cytoplasm"/>
    <property type="evidence" value="ECO:0007669"/>
    <property type="project" value="UniProtKB-SubCell"/>
</dbReference>
<dbReference type="GO" id="GO:0009380">
    <property type="term" value="C:excinuclease repair complex"/>
    <property type="evidence" value="ECO:0007669"/>
    <property type="project" value="InterPro"/>
</dbReference>
<dbReference type="GO" id="GO:0005524">
    <property type="term" value="F:ATP binding"/>
    <property type="evidence" value="ECO:0007669"/>
    <property type="project" value="UniProtKB-UniRule"/>
</dbReference>
<dbReference type="GO" id="GO:0016887">
    <property type="term" value="F:ATP hydrolysis activity"/>
    <property type="evidence" value="ECO:0007669"/>
    <property type="project" value="InterPro"/>
</dbReference>
<dbReference type="GO" id="GO:0003677">
    <property type="term" value="F:DNA binding"/>
    <property type="evidence" value="ECO:0007669"/>
    <property type="project" value="UniProtKB-UniRule"/>
</dbReference>
<dbReference type="GO" id="GO:0009381">
    <property type="term" value="F:excinuclease ABC activity"/>
    <property type="evidence" value="ECO:0007669"/>
    <property type="project" value="UniProtKB-UniRule"/>
</dbReference>
<dbReference type="GO" id="GO:0006289">
    <property type="term" value="P:nucleotide-excision repair"/>
    <property type="evidence" value="ECO:0007669"/>
    <property type="project" value="UniProtKB-UniRule"/>
</dbReference>
<dbReference type="GO" id="GO:0009432">
    <property type="term" value="P:SOS response"/>
    <property type="evidence" value="ECO:0007669"/>
    <property type="project" value="UniProtKB-UniRule"/>
</dbReference>
<dbReference type="CDD" id="cd17916">
    <property type="entry name" value="DEXHc_UvrB"/>
    <property type="match status" value="1"/>
</dbReference>
<dbReference type="CDD" id="cd18790">
    <property type="entry name" value="SF2_C_UvrB"/>
    <property type="match status" value="1"/>
</dbReference>
<dbReference type="Gene3D" id="6.10.140.240">
    <property type="match status" value="1"/>
</dbReference>
<dbReference type="Gene3D" id="3.40.50.300">
    <property type="entry name" value="P-loop containing nucleotide triphosphate hydrolases"/>
    <property type="match status" value="3"/>
</dbReference>
<dbReference type="Gene3D" id="4.10.860.10">
    <property type="entry name" value="UVR domain"/>
    <property type="match status" value="1"/>
</dbReference>
<dbReference type="HAMAP" id="MF_00204">
    <property type="entry name" value="UvrB"/>
    <property type="match status" value="1"/>
</dbReference>
<dbReference type="InterPro" id="IPR006935">
    <property type="entry name" value="Helicase/UvrB_N"/>
</dbReference>
<dbReference type="InterPro" id="IPR014001">
    <property type="entry name" value="Helicase_ATP-bd"/>
</dbReference>
<dbReference type="InterPro" id="IPR001650">
    <property type="entry name" value="Helicase_C-like"/>
</dbReference>
<dbReference type="InterPro" id="IPR027417">
    <property type="entry name" value="P-loop_NTPase"/>
</dbReference>
<dbReference type="InterPro" id="IPR001943">
    <property type="entry name" value="UVR_dom"/>
</dbReference>
<dbReference type="InterPro" id="IPR036876">
    <property type="entry name" value="UVR_dom_sf"/>
</dbReference>
<dbReference type="InterPro" id="IPR004807">
    <property type="entry name" value="UvrB"/>
</dbReference>
<dbReference type="InterPro" id="IPR041471">
    <property type="entry name" value="UvrB_inter"/>
</dbReference>
<dbReference type="InterPro" id="IPR024759">
    <property type="entry name" value="UvrB_YAD/RRR_dom"/>
</dbReference>
<dbReference type="NCBIfam" id="NF003673">
    <property type="entry name" value="PRK05298.1"/>
    <property type="match status" value="1"/>
</dbReference>
<dbReference type="NCBIfam" id="TIGR00631">
    <property type="entry name" value="uvrb"/>
    <property type="match status" value="1"/>
</dbReference>
<dbReference type="PANTHER" id="PTHR24029">
    <property type="entry name" value="UVRABC SYSTEM PROTEIN B"/>
    <property type="match status" value="1"/>
</dbReference>
<dbReference type="PANTHER" id="PTHR24029:SF0">
    <property type="entry name" value="UVRABC SYSTEM PROTEIN B"/>
    <property type="match status" value="1"/>
</dbReference>
<dbReference type="Pfam" id="PF00271">
    <property type="entry name" value="Helicase_C"/>
    <property type="match status" value="1"/>
</dbReference>
<dbReference type="Pfam" id="PF04851">
    <property type="entry name" value="ResIII"/>
    <property type="match status" value="1"/>
</dbReference>
<dbReference type="Pfam" id="PF02151">
    <property type="entry name" value="UVR"/>
    <property type="match status" value="1"/>
</dbReference>
<dbReference type="Pfam" id="PF12344">
    <property type="entry name" value="UvrB"/>
    <property type="match status" value="1"/>
</dbReference>
<dbReference type="Pfam" id="PF17757">
    <property type="entry name" value="UvrB_inter"/>
    <property type="match status" value="1"/>
</dbReference>
<dbReference type="SMART" id="SM00487">
    <property type="entry name" value="DEXDc"/>
    <property type="match status" value="1"/>
</dbReference>
<dbReference type="SMART" id="SM00490">
    <property type="entry name" value="HELICc"/>
    <property type="match status" value="1"/>
</dbReference>
<dbReference type="SUPFAM" id="SSF46600">
    <property type="entry name" value="C-terminal UvrC-binding domain of UvrB"/>
    <property type="match status" value="1"/>
</dbReference>
<dbReference type="SUPFAM" id="SSF52540">
    <property type="entry name" value="P-loop containing nucleoside triphosphate hydrolases"/>
    <property type="match status" value="2"/>
</dbReference>
<dbReference type="PROSITE" id="PS51192">
    <property type="entry name" value="HELICASE_ATP_BIND_1"/>
    <property type="match status" value="1"/>
</dbReference>
<dbReference type="PROSITE" id="PS51194">
    <property type="entry name" value="HELICASE_CTER"/>
    <property type="match status" value="1"/>
</dbReference>
<dbReference type="PROSITE" id="PS50151">
    <property type="entry name" value="UVR"/>
    <property type="match status" value="1"/>
</dbReference>
<reference key="1">
    <citation type="journal article" date="2004" name="Proc. Natl. Acad. Sci. U.S.A.">
        <title>Genomic plasticity of the causative agent of melioidosis, Burkholderia pseudomallei.</title>
        <authorList>
            <person name="Holden M.T.G."/>
            <person name="Titball R.W."/>
            <person name="Peacock S.J."/>
            <person name="Cerdeno-Tarraga A.-M."/>
            <person name="Atkins T."/>
            <person name="Crossman L.C."/>
            <person name="Pitt T."/>
            <person name="Churcher C."/>
            <person name="Mungall K.L."/>
            <person name="Bentley S.D."/>
            <person name="Sebaihia M."/>
            <person name="Thomson N.R."/>
            <person name="Bason N."/>
            <person name="Beacham I.R."/>
            <person name="Brooks K."/>
            <person name="Brown K.A."/>
            <person name="Brown N.F."/>
            <person name="Challis G.L."/>
            <person name="Cherevach I."/>
            <person name="Chillingworth T."/>
            <person name="Cronin A."/>
            <person name="Crossett B."/>
            <person name="Davis P."/>
            <person name="DeShazer D."/>
            <person name="Feltwell T."/>
            <person name="Fraser A."/>
            <person name="Hance Z."/>
            <person name="Hauser H."/>
            <person name="Holroyd S."/>
            <person name="Jagels K."/>
            <person name="Keith K.E."/>
            <person name="Maddison M."/>
            <person name="Moule S."/>
            <person name="Price C."/>
            <person name="Quail M.A."/>
            <person name="Rabbinowitsch E."/>
            <person name="Rutherford K."/>
            <person name="Sanders M."/>
            <person name="Simmonds M."/>
            <person name="Songsivilai S."/>
            <person name="Stevens K."/>
            <person name="Tumapa S."/>
            <person name="Vesaratchavest M."/>
            <person name="Whitehead S."/>
            <person name="Yeats C."/>
            <person name="Barrell B.G."/>
            <person name="Oyston P.C.F."/>
            <person name="Parkhill J."/>
        </authorList>
    </citation>
    <scope>NUCLEOTIDE SEQUENCE [LARGE SCALE GENOMIC DNA]</scope>
    <source>
        <strain>K96243</strain>
    </source>
</reference>
<feature type="chain" id="PRO_0000227295" description="UvrABC system protein B">
    <location>
        <begin position="1"/>
        <end position="696"/>
    </location>
</feature>
<feature type="domain" description="Helicase ATP-binding" evidence="1">
    <location>
        <begin position="46"/>
        <end position="433"/>
    </location>
</feature>
<feature type="domain" description="Helicase C-terminal" evidence="1">
    <location>
        <begin position="450"/>
        <end position="616"/>
    </location>
</feature>
<feature type="domain" description="UVR" evidence="1">
    <location>
        <begin position="647"/>
        <end position="682"/>
    </location>
</feature>
<feature type="short sequence motif" description="Beta-hairpin">
    <location>
        <begin position="112"/>
        <end position="135"/>
    </location>
</feature>
<feature type="binding site" evidence="1">
    <location>
        <begin position="59"/>
        <end position="66"/>
    </location>
    <ligand>
        <name>ATP</name>
        <dbReference type="ChEBI" id="CHEBI:30616"/>
    </ligand>
</feature>
<keyword id="KW-0067">ATP-binding</keyword>
<keyword id="KW-0963">Cytoplasm</keyword>
<keyword id="KW-0227">DNA damage</keyword>
<keyword id="KW-0228">DNA excision</keyword>
<keyword id="KW-0234">DNA repair</keyword>
<keyword id="KW-0267">Excision nuclease</keyword>
<keyword id="KW-0547">Nucleotide-binding</keyword>
<keyword id="KW-1185">Reference proteome</keyword>
<keyword id="KW-0742">SOS response</keyword>
<accession>Q63NE3</accession>
<proteinExistence type="inferred from homology"/>
<comment type="function">
    <text evidence="1">The UvrABC repair system catalyzes the recognition and processing of DNA lesions. A damage recognition complex composed of 2 UvrA and 2 UvrB subunits scans DNA for abnormalities. Upon binding of the UvrA(2)B(2) complex to a putative damaged site, the DNA wraps around one UvrB monomer. DNA wrap is dependent on ATP binding by UvrB and probably causes local melting of the DNA helix, facilitating insertion of UvrB beta-hairpin between the DNA strands. Then UvrB probes one DNA strand for the presence of a lesion. If a lesion is found the UvrA subunits dissociate and the UvrB-DNA preincision complex is formed. This complex is subsequently bound by UvrC and the second UvrB is released. If no lesion is found, the DNA wraps around the other UvrB subunit that will check the other stand for damage.</text>
</comment>
<comment type="subunit">
    <text evidence="1">Forms a heterotetramer with UvrA during the search for lesions. Interacts with UvrC in an incision complex.</text>
</comment>
<comment type="subcellular location">
    <subcellularLocation>
        <location evidence="1">Cytoplasm</location>
    </subcellularLocation>
</comment>
<comment type="domain">
    <text evidence="1">The beta-hairpin motif is involved in DNA binding.</text>
</comment>
<comment type="similarity">
    <text evidence="1">Belongs to the UvrB family.</text>
</comment>
<name>UVRB_BURPS</name>
<gene>
    <name evidence="1" type="primary">uvrB</name>
    <name type="ordered locus">BPSS0356</name>
</gene>